<feature type="chain" id="PRO_0000130524" description="Large ribosomal subunit protein uL29">
    <location>
        <begin position="1"/>
        <end position="73"/>
    </location>
</feature>
<evidence type="ECO:0000305" key="1"/>
<name>RL29_SACS2</name>
<comment type="similarity">
    <text evidence="1">Belongs to the universal ribosomal protein uL29 family.</text>
</comment>
<proteinExistence type="inferred from homology"/>
<reference key="1">
    <citation type="journal article" date="2000" name="Genome">
        <title>Gene content and organization of a 281-kbp contig from the genome of the extremely thermophilic archaeon, Sulfolobus solfataricus P2.</title>
        <authorList>
            <person name="Charlebois R.L."/>
            <person name="Singh R.K."/>
            <person name="Chan-Weiher C.C.-Y."/>
            <person name="Allard G."/>
            <person name="Chow C."/>
            <person name="Confalonieri F."/>
            <person name="Curtis B."/>
            <person name="Duguet M."/>
            <person name="Erauso G."/>
            <person name="Faguy D."/>
            <person name="Gaasterland T."/>
            <person name="Garrett R.A."/>
            <person name="Gordon P."/>
            <person name="Jeffries A.C."/>
            <person name="Kozera C."/>
            <person name="Kushwaha N."/>
            <person name="Lafleur E."/>
            <person name="Medina N."/>
            <person name="Peng X."/>
            <person name="Penny S.L."/>
            <person name="She Q."/>
            <person name="St Jean A."/>
            <person name="van der Oost J."/>
            <person name="Young F."/>
            <person name="Zivanovic Y."/>
            <person name="Doolittle W.F."/>
            <person name="Ragan M.A."/>
            <person name="Sensen C.W."/>
        </authorList>
    </citation>
    <scope>NUCLEOTIDE SEQUENCE [LARGE SCALE GENOMIC DNA]</scope>
    <source>
        <strain>ATCC 35092 / DSM 1617 / JCM 11322 / P2</strain>
    </source>
</reference>
<reference key="2">
    <citation type="journal article" date="2001" name="Proc. Natl. Acad. Sci. U.S.A.">
        <title>The complete genome of the crenarchaeon Sulfolobus solfataricus P2.</title>
        <authorList>
            <person name="She Q."/>
            <person name="Singh R.K."/>
            <person name="Confalonieri F."/>
            <person name="Zivanovic Y."/>
            <person name="Allard G."/>
            <person name="Awayez M.J."/>
            <person name="Chan-Weiher C.C.-Y."/>
            <person name="Clausen I.G."/>
            <person name="Curtis B.A."/>
            <person name="De Moors A."/>
            <person name="Erauso G."/>
            <person name="Fletcher C."/>
            <person name="Gordon P.M.K."/>
            <person name="Heikamp-de Jong I."/>
            <person name="Jeffries A.C."/>
            <person name="Kozera C.J."/>
            <person name="Medina N."/>
            <person name="Peng X."/>
            <person name="Thi-Ngoc H.P."/>
            <person name="Redder P."/>
            <person name="Schenk M.E."/>
            <person name="Theriault C."/>
            <person name="Tolstrup N."/>
            <person name="Charlebois R.L."/>
            <person name="Doolittle W.F."/>
            <person name="Duguet M."/>
            <person name="Gaasterland T."/>
            <person name="Garrett R.A."/>
            <person name="Ragan M.A."/>
            <person name="Sensen C.W."/>
            <person name="Van der Oost J."/>
        </authorList>
    </citation>
    <scope>NUCLEOTIDE SEQUENCE [LARGE SCALE GENOMIC DNA]</scope>
    <source>
        <strain>ATCC 35092 / DSM 1617 / JCM 11322 / P2</strain>
    </source>
</reference>
<keyword id="KW-1185">Reference proteome</keyword>
<keyword id="KW-0687">Ribonucleoprotein</keyword>
<keyword id="KW-0689">Ribosomal protein</keyword>
<dbReference type="EMBL" id="Y18930">
    <property type="status" value="NOT_ANNOTATED_CDS"/>
    <property type="molecule type" value="Genomic_DNA"/>
</dbReference>
<dbReference type="EMBL" id="AE006641">
    <property type="protein sequence ID" value="AAK41011.1"/>
    <property type="molecule type" value="Genomic_DNA"/>
</dbReference>
<dbReference type="PIR" id="D90219">
    <property type="entry name" value="D90219"/>
</dbReference>
<dbReference type="SMR" id="P58084"/>
<dbReference type="FunCoup" id="P58084">
    <property type="interactions" value="200"/>
</dbReference>
<dbReference type="STRING" id="273057.SSO6397"/>
<dbReference type="PaxDb" id="273057-SSO6397"/>
<dbReference type="EnsemblBacteria" id="AAK41011">
    <property type="protein sequence ID" value="AAK41011"/>
    <property type="gene ID" value="SSO6397"/>
</dbReference>
<dbReference type="KEGG" id="sso:SSO6397"/>
<dbReference type="PATRIC" id="fig|273057.12.peg.711"/>
<dbReference type="eggNOG" id="arCOG00785">
    <property type="taxonomic scope" value="Archaea"/>
</dbReference>
<dbReference type="HOGENOM" id="CLU_158491_2_0_2"/>
<dbReference type="InParanoid" id="P58084"/>
<dbReference type="Proteomes" id="UP000001974">
    <property type="component" value="Chromosome"/>
</dbReference>
<dbReference type="GO" id="GO:0022625">
    <property type="term" value="C:cytosolic large ribosomal subunit"/>
    <property type="evidence" value="ECO:0000318"/>
    <property type="project" value="GO_Central"/>
</dbReference>
<dbReference type="GO" id="GO:0003735">
    <property type="term" value="F:structural constituent of ribosome"/>
    <property type="evidence" value="ECO:0007669"/>
    <property type="project" value="InterPro"/>
</dbReference>
<dbReference type="GO" id="GO:0006412">
    <property type="term" value="P:translation"/>
    <property type="evidence" value="ECO:0007669"/>
    <property type="project" value="UniProtKB-UniRule"/>
</dbReference>
<dbReference type="FunFam" id="1.10.287.310:FF:000001">
    <property type="entry name" value="50S ribosomal protein L29"/>
    <property type="match status" value="1"/>
</dbReference>
<dbReference type="Gene3D" id="1.10.287.310">
    <property type="match status" value="1"/>
</dbReference>
<dbReference type="HAMAP" id="MF_00374">
    <property type="entry name" value="Ribosomal_uL29"/>
    <property type="match status" value="1"/>
</dbReference>
<dbReference type="InterPro" id="IPR050063">
    <property type="entry name" value="Ribosomal_protein_uL29"/>
</dbReference>
<dbReference type="InterPro" id="IPR001854">
    <property type="entry name" value="Ribosomal_uL29"/>
</dbReference>
<dbReference type="InterPro" id="IPR018254">
    <property type="entry name" value="Ribosomal_uL29_CS"/>
</dbReference>
<dbReference type="InterPro" id="IPR036049">
    <property type="entry name" value="Ribosomal_uL29_sf"/>
</dbReference>
<dbReference type="NCBIfam" id="TIGR00012">
    <property type="entry name" value="L29"/>
    <property type="match status" value="1"/>
</dbReference>
<dbReference type="PANTHER" id="PTHR10916">
    <property type="entry name" value="60S RIBOSOMAL PROTEIN L35/50S RIBOSOMAL PROTEIN L29"/>
    <property type="match status" value="1"/>
</dbReference>
<dbReference type="PANTHER" id="PTHR10916:SF0">
    <property type="entry name" value="LARGE RIBOSOMAL SUBUNIT PROTEIN UL29C"/>
    <property type="match status" value="1"/>
</dbReference>
<dbReference type="Pfam" id="PF00831">
    <property type="entry name" value="Ribosomal_L29"/>
    <property type="match status" value="1"/>
</dbReference>
<dbReference type="SUPFAM" id="SSF46561">
    <property type="entry name" value="Ribosomal protein L29 (L29p)"/>
    <property type="match status" value="1"/>
</dbReference>
<dbReference type="PROSITE" id="PS00579">
    <property type="entry name" value="RIBOSOMAL_L29"/>
    <property type="match status" value="1"/>
</dbReference>
<sequence length="73" mass="8549">MTVDPEELRKMETGDLLKKLDELKLELIKLRVQSRMGTLKNTASIRNTRKDIARILTVLSEKKKVKREKVENK</sequence>
<accession>P58084</accession>
<organism>
    <name type="scientific">Saccharolobus solfataricus (strain ATCC 35092 / DSM 1617 / JCM 11322 / P2)</name>
    <name type="common">Sulfolobus solfataricus</name>
    <dbReference type="NCBI Taxonomy" id="273057"/>
    <lineage>
        <taxon>Archaea</taxon>
        <taxon>Thermoproteota</taxon>
        <taxon>Thermoprotei</taxon>
        <taxon>Sulfolobales</taxon>
        <taxon>Sulfolobaceae</taxon>
        <taxon>Saccharolobus</taxon>
    </lineage>
</organism>
<gene>
    <name type="primary">rpl29</name>
    <name type="synonym">rpl29Ab</name>
    <name type="ordered locus">SSO0711</name>
</gene>
<protein>
    <recommendedName>
        <fullName evidence="1">Large ribosomal subunit protein uL29</fullName>
    </recommendedName>
    <alternativeName>
        <fullName>50S ribosomal protein L29</fullName>
    </alternativeName>
</protein>